<dbReference type="EC" id="1.5.1.5" evidence="1"/>
<dbReference type="EC" id="3.5.4.9" evidence="1"/>
<dbReference type="EMBL" id="BA000037">
    <property type="protein sequence ID" value="BAC95155.1"/>
    <property type="molecule type" value="Genomic_DNA"/>
</dbReference>
<dbReference type="RefSeq" id="WP_011079917.1">
    <property type="nucleotide sequence ID" value="NC_005139.1"/>
</dbReference>
<dbReference type="SMR" id="Q7MIX2"/>
<dbReference type="STRING" id="672.VV93_v1c20980"/>
<dbReference type="GeneID" id="93896242"/>
<dbReference type="KEGG" id="vvy:VV2391"/>
<dbReference type="eggNOG" id="COG0190">
    <property type="taxonomic scope" value="Bacteria"/>
</dbReference>
<dbReference type="HOGENOM" id="CLU_034045_2_1_6"/>
<dbReference type="UniPathway" id="UPA00193"/>
<dbReference type="Proteomes" id="UP000002675">
    <property type="component" value="Chromosome I"/>
</dbReference>
<dbReference type="GO" id="GO:0005829">
    <property type="term" value="C:cytosol"/>
    <property type="evidence" value="ECO:0007669"/>
    <property type="project" value="TreeGrafter"/>
</dbReference>
<dbReference type="GO" id="GO:0004477">
    <property type="term" value="F:methenyltetrahydrofolate cyclohydrolase activity"/>
    <property type="evidence" value="ECO:0007669"/>
    <property type="project" value="UniProtKB-UniRule"/>
</dbReference>
<dbReference type="GO" id="GO:0004488">
    <property type="term" value="F:methylenetetrahydrofolate dehydrogenase (NADP+) activity"/>
    <property type="evidence" value="ECO:0007669"/>
    <property type="project" value="UniProtKB-UniRule"/>
</dbReference>
<dbReference type="GO" id="GO:0000105">
    <property type="term" value="P:L-histidine biosynthetic process"/>
    <property type="evidence" value="ECO:0007669"/>
    <property type="project" value="UniProtKB-KW"/>
</dbReference>
<dbReference type="GO" id="GO:0009086">
    <property type="term" value="P:methionine biosynthetic process"/>
    <property type="evidence" value="ECO:0007669"/>
    <property type="project" value="UniProtKB-KW"/>
</dbReference>
<dbReference type="GO" id="GO:0006164">
    <property type="term" value="P:purine nucleotide biosynthetic process"/>
    <property type="evidence" value="ECO:0007669"/>
    <property type="project" value="UniProtKB-KW"/>
</dbReference>
<dbReference type="GO" id="GO:0035999">
    <property type="term" value="P:tetrahydrofolate interconversion"/>
    <property type="evidence" value="ECO:0007669"/>
    <property type="project" value="UniProtKB-UniRule"/>
</dbReference>
<dbReference type="CDD" id="cd01080">
    <property type="entry name" value="NAD_bind_m-THF_DH_Cyclohyd"/>
    <property type="match status" value="1"/>
</dbReference>
<dbReference type="FunFam" id="3.40.50.10860:FF:000001">
    <property type="entry name" value="Bifunctional protein FolD"/>
    <property type="match status" value="1"/>
</dbReference>
<dbReference type="FunFam" id="3.40.50.720:FF:000006">
    <property type="entry name" value="Bifunctional protein FolD"/>
    <property type="match status" value="1"/>
</dbReference>
<dbReference type="Gene3D" id="3.40.50.10860">
    <property type="entry name" value="Leucine Dehydrogenase, chain A, domain 1"/>
    <property type="match status" value="1"/>
</dbReference>
<dbReference type="Gene3D" id="3.40.50.720">
    <property type="entry name" value="NAD(P)-binding Rossmann-like Domain"/>
    <property type="match status" value="1"/>
</dbReference>
<dbReference type="HAMAP" id="MF_01576">
    <property type="entry name" value="THF_DHG_CYH"/>
    <property type="match status" value="1"/>
</dbReference>
<dbReference type="InterPro" id="IPR046346">
    <property type="entry name" value="Aminoacid_DH-like_N_sf"/>
</dbReference>
<dbReference type="InterPro" id="IPR036291">
    <property type="entry name" value="NAD(P)-bd_dom_sf"/>
</dbReference>
<dbReference type="InterPro" id="IPR000672">
    <property type="entry name" value="THF_DH/CycHdrlase"/>
</dbReference>
<dbReference type="InterPro" id="IPR020630">
    <property type="entry name" value="THF_DH/CycHdrlase_cat_dom"/>
</dbReference>
<dbReference type="InterPro" id="IPR020867">
    <property type="entry name" value="THF_DH/CycHdrlase_CS"/>
</dbReference>
<dbReference type="InterPro" id="IPR020631">
    <property type="entry name" value="THF_DH/CycHdrlase_NAD-bd_dom"/>
</dbReference>
<dbReference type="NCBIfam" id="NF008058">
    <property type="entry name" value="PRK10792.1"/>
    <property type="match status" value="1"/>
</dbReference>
<dbReference type="NCBIfam" id="NF010783">
    <property type="entry name" value="PRK14186.1"/>
    <property type="match status" value="1"/>
</dbReference>
<dbReference type="PANTHER" id="PTHR48099:SF5">
    <property type="entry name" value="C-1-TETRAHYDROFOLATE SYNTHASE, CYTOPLASMIC"/>
    <property type="match status" value="1"/>
</dbReference>
<dbReference type="PANTHER" id="PTHR48099">
    <property type="entry name" value="C-1-TETRAHYDROFOLATE SYNTHASE, CYTOPLASMIC-RELATED"/>
    <property type="match status" value="1"/>
</dbReference>
<dbReference type="Pfam" id="PF00763">
    <property type="entry name" value="THF_DHG_CYH"/>
    <property type="match status" value="1"/>
</dbReference>
<dbReference type="Pfam" id="PF02882">
    <property type="entry name" value="THF_DHG_CYH_C"/>
    <property type="match status" value="1"/>
</dbReference>
<dbReference type="PRINTS" id="PR00085">
    <property type="entry name" value="THFDHDRGNASE"/>
</dbReference>
<dbReference type="SUPFAM" id="SSF53223">
    <property type="entry name" value="Aminoacid dehydrogenase-like, N-terminal domain"/>
    <property type="match status" value="1"/>
</dbReference>
<dbReference type="SUPFAM" id="SSF51735">
    <property type="entry name" value="NAD(P)-binding Rossmann-fold domains"/>
    <property type="match status" value="1"/>
</dbReference>
<dbReference type="PROSITE" id="PS00766">
    <property type="entry name" value="THF_DHG_CYH_1"/>
    <property type="match status" value="1"/>
</dbReference>
<dbReference type="PROSITE" id="PS00767">
    <property type="entry name" value="THF_DHG_CYH_2"/>
    <property type="match status" value="1"/>
</dbReference>
<accession>Q7MIX2</accession>
<reference key="1">
    <citation type="journal article" date="2003" name="Genome Res.">
        <title>Comparative genome analysis of Vibrio vulnificus, a marine pathogen.</title>
        <authorList>
            <person name="Chen C.-Y."/>
            <person name="Wu K.-M."/>
            <person name="Chang Y.-C."/>
            <person name="Chang C.-H."/>
            <person name="Tsai H.-C."/>
            <person name="Liao T.-L."/>
            <person name="Liu Y.-M."/>
            <person name="Chen H.-J."/>
            <person name="Shen A.B.-T."/>
            <person name="Li J.-C."/>
            <person name="Su T.-L."/>
            <person name="Shao C.-P."/>
            <person name="Lee C.-T."/>
            <person name="Hor L.-I."/>
            <person name="Tsai S.-F."/>
        </authorList>
    </citation>
    <scope>NUCLEOTIDE SEQUENCE [LARGE SCALE GENOMIC DNA]</scope>
    <source>
        <strain>YJ016</strain>
    </source>
</reference>
<organism>
    <name type="scientific">Vibrio vulnificus (strain YJ016)</name>
    <dbReference type="NCBI Taxonomy" id="196600"/>
    <lineage>
        <taxon>Bacteria</taxon>
        <taxon>Pseudomonadati</taxon>
        <taxon>Pseudomonadota</taxon>
        <taxon>Gammaproteobacteria</taxon>
        <taxon>Vibrionales</taxon>
        <taxon>Vibrionaceae</taxon>
        <taxon>Vibrio</taxon>
    </lineage>
</organism>
<protein>
    <recommendedName>
        <fullName evidence="1">Bifunctional protein FolD</fullName>
    </recommendedName>
    <domain>
        <recommendedName>
            <fullName evidence="1">Methylenetetrahydrofolate dehydrogenase</fullName>
            <ecNumber evidence="1">1.5.1.5</ecNumber>
        </recommendedName>
    </domain>
    <domain>
        <recommendedName>
            <fullName evidence="1">Methenyltetrahydrofolate cyclohydrolase</fullName>
            <ecNumber evidence="1">3.5.4.9</ecNumber>
        </recommendedName>
    </domain>
</protein>
<comment type="function">
    <text evidence="1">Catalyzes the oxidation of 5,10-methylenetetrahydrofolate to 5,10-methenyltetrahydrofolate and then the hydrolysis of 5,10-methenyltetrahydrofolate to 10-formyltetrahydrofolate.</text>
</comment>
<comment type="catalytic activity">
    <reaction evidence="1">
        <text>(6R)-5,10-methylene-5,6,7,8-tetrahydrofolate + NADP(+) = (6R)-5,10-methenyltetrahydrofolate + NADPH</text>
        <dbReference type="Rhea" id="RHEA:22812"/>
        <dbReference type="ChEBI" id="CHEBI:15636"/>
        <dbReference type="ChEBI" id="CHEBI:57455"/>
        <dbReference type="ChEBI" id="CHEBI:57783"/>
        <dbReference type="ChEBI" id="CHEBI:58349"/>
        <dbReference type="EC" id="1.5.1.5"/>
    </reaction>
</comment>
<comment type="catalytic activity">
    <reaction evidence="1">
        <text>(6R)-5,10-methenyltetrahydrofolate + H2O = (6R)-10-formyltetrahydrofolate + H(+)</text>
        <dbReference type="Rhea" id="RHEA:23700"/>
        <dbReference type="ChEBI" id="CHEBI:15377"/>
        <dbReference type="ChEBI" id="CHEBI:15378"/>
        <dbReference type="ChEBI" id="CHEBI:57455"/>
        <dbReference type="ChEBI" id="CHEBI:195366"/>
        <dbReference type="EC" id="3.5.4.9"/>
    </reaction>
</comment>
<comment type="pathway">
    <text evidence="1">One-carbon metabolism; tetrahydrofolate interconversion.</text>
</comment>
<comment type="subunit">
    <text evidence="1">Homodimer.</text>
</comment>
<comment type="similarity">
    <text evidence="1">Belongs to the tetrahydrofolate dehydrogenase/cyclohydrolase family.</text>
</comment>
<name>FOLD_VIBVY</name>
<proteinExistence type="inferred from homology"/>
<gene>
    <name evidence="1" type="primary">folD</name>
    <name type="ordered locus">VV2391</name>
</gene>
<keyword id="KW-0028">Amino-acid biosynthesis</keyword>
<keyword id="KW-0368">Histidine biosynthesis</keyword>
<keyword id="KW-0378">Hydrolase</keyword>
<keyword id="KW-0486">Methionine biosynthesis</keyword>
<keyword id="KW-0511">Multifunctional enzyme</keyword>
<keyword id="KW-0521">NADP</keyword>
<keyword id="KW-0554">One-carbon metabolism</keyword>
<keyword id="KW-0560">Oxidoreductase</keyword>
<keyword id="KW-0658">Purine biosynthesis</keyword>
<evidence type="ECO:0000255" key="1">
    <source>
        <dbReference type="HAMAP-Rule" id="MF_01576"/>
    </source>
</evidence>
<sequence>MTAQNIDGTLISQTVRSEVAARVKARVAAGLRAPGLAVVLVGEDPASQVYVGSKRRACEEVGFVSKSFDLPASTSEEELLALIDELNNDAEIDGILVQLPLPAGIDSTHVLESIHPEKDVDGFHPYNVGRLAQRIPKLRSCTPKGIITLLERYNIALRGKHAVIVGASNIVGRPMTLELLLAGCTTTTCHRFTKDLEGHVRQADVLVVAVGKPNFIPGEWVKEGAIVVDVGINRLESGKLIGDVEYNKARERASFITPVPGGVGPMTVASLIENTMLACEQYHTK</sequence>
<feature type="chain" id="PRO_0000268560" description="Bifunctional protein FolD">
    <location>
        <begin position="1"/>
        <end position="285"/>
    </location>
</feature>
<feature type="binding site" evidence="1">
    <location>
        <begin position="166"/>
        <end position="168"/>
    </location>
    <ligand>
        <name>NADP(+)</name>
        <dbReference type="ChEBI" id="CHEBI:58349"/>
    </ligand>
</feature>
<feature type="binding site" evidence="1">
    <location>
        <position position="232"/>
    </location>
    <ligand>
        <name>NADP(+)</name>
        <dbReference type="ChEBI" id="CHEBI:58349"/>
    </ligand>
</feature>